<protein>
    <recommendedName>
        <fullName evidence="1">Leucine--tRNA ligase</fullName>
        <ecNumber evidence="1">6.1.1.4</ecNumber>
    </recommendedName>
    <alternativeName>
        <fullName evidence="1">Leucyl-tRNA synthetase</fullName>
        <shortName evidence="1">LeuRS</shortName>
    </alternativeName>
</protein>
<name>SYL_SORC5</name>
<organism>
    <name type="scientific">Sorangium cellulosum (strain So ce56)</name>
    <name type="common">Polyangium cellulosum (strain So ce56)</name>
    <dbReference type="NCBI Taxonomy" id="448385"/>
    <lineage>
        <taxon>Bacteria</taxon>
        <taxon>Pseudomonadati</taxon>
        <taxon>Myxococcota</taxon>
        <taxon>Polyangia</taxon>
        <taxon>Polyangiales</taxon>
        <taxon>Polyangiaceae</taxon>
        <taxon>Sorangium</taxon>
    </lineage>
</organism>
<dbReference type="EC" id="6.1.1.4" evidence="1"/>
<dbReference type="EMBL" id="AM746676">
    <property type="protein sequence ID" value="CAN97586.1"/>
    <property type="molecule type" value="Genomic_DNA"/>
</dbReference>
<dbReference type="SMR" id="A9EYY7"/>
<dbReference type="STRING" id="448385.sce7417"/>
<dbReference type="KEGG" id="scl:sce7417"/>
<dbReference type="eggNOG" id="COG0495">
    <property type="taxonomic scope" value="Bacteria"/>
</dbReference>
<dbReference type="HOGENOM" id="CLU_004427_0_0_7"/>
<dbReference type="OrthoDB" id="9810365at2"/>
<dbReference type="BioCyc" id="SCEL448385:SCE_RS37990-MONOMER"/>
<dbReference type="Proteomes" id="UP000002139">
    <property type="component" value="Chromosome"/>
</dbReference>
<dbReference type="GO" id="GO:0005737">
    <property type="term" value="C:cytoplasm"/>
    <property type="evidence" value="ECO:0007669"/>
    <property type="project" value="UniProtKB-SubCell"/>
</dbReference>
<dbReference type="GO" id="GO:0002161">
    <property type="term" value="F:aminoacyl-tRNA deacylase activity"/>
    <property type="evidence" value="ECO:0007669"/>
    <property type="project" value="InterPro"/>
</dbReference>
<dbReference type="GO" id="GO:0005524">
    <property type="term" value="F:ATP binding"/>
    <property type="evidence" value="ECO:0007669"/>
    <property type="project" value="UniProtKB-UniRule"/>
</dbReference>
<dbReference type="GO" id="GO:0004823">
    <property type="term" value="F:leucine-tRNA ligase activity"/>
    <property type="evidence" value="ECO:0007669"/>
    <property type="project" value="UniProtKB-UniRule"/>
</dbReference>
<dbReference type="GO" id="GO:0006429">
    <property type="term" value="P:leucyl-tRNA aminoacylation"/>
    <property type="evidence" value="ECO:0007669"/>
    <property type="project" value="UniProtKB-UniRule"/>
</dbReference>
<dbReference type="CDD" id="cd07958">
    <property type="entry name" value="Anticodon_Ia_Leu_BEm"/>
    <property type="match status" value="1"/>
</dbReference>
<dbReference type="FunFam" id="3.40.50.620:FF:000056">
    <property type="entry name" value="Leucine--tRNA ligase"/>
    <property type="match status" value="1"/>
</dbReference>
<dbReference type="FunFam" id="3.40.50.620:FF:000077">
    <property type="entry name" value="Leucine--tRNA ligase"/>
    <property type="match status" value="1"/>
</dbReference>
<dbReference type="FunFam" id="1.10.730.10:FF:000011">
    <property type="entry name" value="Leucine--tRNA ligase chloroplastic/mitochondrial"/>
    <property type="match status" value="1"/>
</dbReference>
<dbReference type="Gene3D" id="3.10.20.590">
    <property type="match status" value="1"/>
</dbReference>
<dbReference type="Gene3D" id="3.40.50.620">
    <property type="entry name" value="HUPs"/>
    <property type="match status" value="2"/>
</dbReference>
<dbReference type="Gene3D" id="1.10.730.10">
    <property type="entry name" value="Isoleucyl-tRNA Synthetase, Domain 1"/>
    <property type="match status" value="1"/>
</dbReference>
<dbReference type="HAMAP" id="MF_00049_B">
    <property type="entry name" value="Leu_tRNA_synth_B"/>
    <property type="match status" value="1"/>
</dbReference>
<dbReference type="InterPro" id="IPR002300">
    <property type="entry name" value="aa-tRNA-synth_Ia"/>
</dbReference>
<dbReference type="InterPro" id="IPR002302">
    <property type="entry name" value="Leu-tRNA-ligase"/>
</dbReference>
<dbReference type="InterPro" id="IPR025709">
    <property type="entry name" value="Leu_tRNA-synth_edit"/>
</dbReference>
<dbReference type="InterPro" id="IPR013155">
    <property type="entry name" value="M/V/L/I-tRNA-synth_anticd-bd"/>
</dbReference>
<dbReference type="InterPro" id="IPR015413">
    <property type="entry name" value="Methionyl/Leucyl_tRNA_Synth"/>
</dbReference>
<dbReference type="InterPro" id="IPR014729">
    <property type="entry name" value="Rossmann-like_a/b/a_fold"/>
</dbReference>
<dbReference type="InterPro" id="IPR009080">
    <property type="entry name" value="tRNAsynth_Ia_anticodon-bd"/>
</dbReference>
<dbReference type="InterPro" id="IPR009008">
    <property type="entry name" value="Val/Leu/Ile-tRNA-synth_edit"/>
</dbReference>
<dbReference type="NCBIfam" id="TIGR00396">
    <property type="entry name" value="leuS_bact"/>
    <property type="match status" value="1"/>
</dbReference>
<dbReference type="PANTHER" id="PTHR43740:SF2">
    <property type="entry name" value="LEUCINE--TRNA LIGASE, MITOCHONDRIAL"/>
    <property type="match status" value="1"/>
</dbReference>
<dbReference type="PANTHER" id="PTHR43740">
    <property type="entry name" value="LEUCYL-TRNA SYNTHETASE"/>
    <property type="match status" value="1"/>
</dbReference>
<dbReference type="Pfam" id="PF08264">
    <property type="entry name" value="Anticodon_1"/>
    <property type="match status" value="1"/>
</dbReference>
<dbReference type="Pfam" id="PF00133">
    <property type="entry name" value="tRNA-synt_1"/>
    <property type="match status" value="1"/>
</dbReference>
<dbReference type="Pfam" id="PF13603">
    <property type="entry name" value="tRNA-synt_1_2"/>
    <property type="match status" value="1"/>
</dbReference>
<dbReference type="Pfam" id="PF09334">
    <property type="entry name" value="tRNA-synt_1g"/>
    <property type="match status" value="1"/>
</dbReference>
<dbReference type="PRINTS" id="PR00985">
    <property type="entry name" value="TRNASYNTHLEU"/>
</dbReference>
<dbReference type="SUPFAM" id="SSF47323">
    <property type="entry name" value="Anticodon-binding domain of a subclass of class I aminoacyl-tRNA synthetases"/>
    <property type="match status" value="1"/>
</dbReference>
<dbReference type="SUPFAM" id="SSF52374">
    <property type="entry name" value="Nucleotidylyl transferase"/>
    <property type="match status" value="1"/>
</dbReference>
<dbReference type="SUPFAM" id="SSF50677">
    <property type="entry name" value="ValRS/IleRS/LeuRS editing domain"/>
    <property type="match status" value="1"/>
</dbReference>
<gene>
    <name evidence="1" type="primary">leuS</name>
    <name type="ordered locus">sce7417</name>
</gene>
<evidence type="ECO:0000255" key="1">
    <source>
        <dbReference type="HAMAP-Rule" id="MF_00049"/>
    </source>
</evidence>
<evidence type="ECO:0000256" key="2">
    <source>
        <dbReference type="SAM" id="MobiDB-lite"/>
    </source>
</evidence>
<keyword id="KW-0030">Aminoacyl-tRNA synthetase</keyword>
<keyword id="KW-0067">ATP-binding</keyword>
<keyword id="KW-0963">Cytoplasm</keyword>
<keyword id="KW-0436">Ligase</keyword>
<keyword id="KW-0547">Nucleotide-binding</keyword>
<keyword id="KW-0648">Protein biosynthesis</keyword>
<keyword id="KW-1185">Reference proteome</keyword>
<feature type="chain" id="PRO_0000334822" description="Leucine--tRNA ligase">
    <location>
        <begin position="1"/>
        <end position="854"/>
    </location>
</feature>
<feature type="region of interest" description="Disordered" evidence="2">
    <location>
        <begin position="1"/>
        <end position="32"/>
    </location>
</feature>
<feature type="short sequence motif" description="'HIGH' region">
    <location>
        <begin position="69"/>
        <end position="80"/>
    </location>
</feature>
<feature type="short sequence motif" description="'KMSKS' region">
    <location>
        <begin position="633"/>
        <end position="637"/>
    </location>
</feature>
<feature type="compositionally biased region" description="Basic and acidic residues" evidence="2">
    <location>
        <begin position="23"/>
        <end position="32"/>
    </location>
</feature>
<feature type="binding site" evidence="1">
    <location>
        <position position="636"/>
    </location>
    <ligand>
        <name>ATP</name>
        <dbReference type="ChEBI" id="CHEBI:30616"/>
    </ligand>
</feature>
<reference key="1">
    <citation type="journal article" date="2007" name="Nat. Biotechnol.">
        <title>Complete genome sequence of the myxobacterium Sorangium cellulosum.</title>
        <authorList>
            <person name="Schneiker S."/>
            <person name="Perlova O."/>
            <person name="Kaiser O."/>
            <person name="Gerth K."/>
            <person name="Alici A."/>
            <person name="Altmeyer M.O."/>
            <person name="Bartels D."/>
            <person name="Bekel T."/>
            <person name="Beyer S."/>
            <person name="Bode E."/>
            <person name="Bode H.B."/>
            <person name="Bolten C.J."/>
            <person name="Choudhuri J.V."/>
            <person name="Doss S."/>
            <person name="Elnakady Y.A."/>
            <person name="Frank B."/>
            <person name="Gaigalat L."/>
            <person name="Goesmann A."/>
            <person name="Groeger C."/>
            <person name="Gross F."/>
            <person name="Jelsbak L."/>
            <person name="Jelsbak L."/>
            <person name="Kalinowski J."/>
            <person name="Kegler C."/>
            <person name="Knauber T."/>
            <person name="Konietzny S."/>
            <person name="Kopp M."/>
            <person name="Krause L."/>
            <person name="Krug D."/>
            <person name="Linke B."/>
            <person name="Mahmud T."/>
            <person name="Martinez-Arias R."/>
            <person name="McHardy A.C."/>
            <person name="Merai M."/>
            <person name="Meyer F."/>
            <person name="Mormann S."/>
            <person name="Munoz-Dorado J."/>
            <person name="Perez J."/>
            <person name="Pradella S."/>
            <person name="Rachid S."/>
            <person name="Raddatz G."/>
            <person name="Rosenau F."/>
            <person name="Rueckert C."/>
            <person name="Sasse F."/>
            <person name="Scharfe M."/>
            <person name="Schuster S.C."/>
            <person name="Suen G."/>
            <person name="Treuner-Lange A."/>
            <person name="Velicer G.J."/>
            <person name="Vorholter F.-J."/>
            <person name="Weissman K.J."/>
            <person name="Welch R.D."/>
            <person name="Wenzel S.C."/>
            <person name="Whitworth D.E."/>
            <person name="Wilhelm S."/>
            <person name="Wittmann C."/>
            <person name="Bloecker H."/>
            <person name="Puehler A."/>
            <person name="Mueller R."/>
        </authorList>
    </citation>
    <scope>NUCLEOTIDE SEQUENCE [LARGE SCALE GENOMIC DNA]</scope>
    <source>
        <strain>So ce56</strain>
    </source>
</reference>
<sequence>MARRDMAAETMDPRASTEPSPNEPREPARYDHAAVEPRWQRAWEEGETFRAVRSADPARGKRYVLDMFPYPSGSGLHVGHPEGYTATDIMSRYFRMRGIDVLHVMGWDAFGLPAEQHALETGTHPADTTARNIATFKRQLKMLGFSYDWSRELSTTDPRYVRWTQWIFLQLFKKGLAYQDEVSVNWCPALGTVLANEEVIDGKSERGSHPVYRTPLRQWMLRITAYADRLAEDLRLLDWPEGTVAMQRSWIGRSEGALITFEVKGWGKGALSVFTTRPDTLMGVTYVVLAPEHPLTTWLTSAESGASEPRREAVRAYVAAAAGKSDRERLAAAAREKTGVDTGLVAVHPITGVEVPIWVADYVLGGYGTGAVMAVPGHDERDFSFARTYGLPIVEVVSPDGSLHDQLEAAYVDPGVAVRSGEFDGLATEECKRAVIARLEALGRGKREVNYKLRDWVFSRQRYWGEPIPIYFPVELADPQGDPRKGAAHTIRYDQPIAVDEASLPIELPPLADFRPGDDPAGPLARAVDWRFFQRDGKWYARETNTMPQWAGSCWYYLRFLDPQNDAEPFSEAAYDAWMPVDLYVGGAEHGVLHLLYARFWHKVLYDLGHVKHPEPFAKLVHQGMILGEDNEKMSKSRGNVINPDDIVRAHGADVLRMYEMFMGPLEAVKPWQSGQIQGVVRFRDRVFATCTRPLSDAMDDATSRQLHRTIKKVTGDIEGMAFNTAISAMMVFVNHLSSLPSPPREAVLRLILLVSPFAPHLAEELWRLTGHERSLSYEPWPTYDEAFCVDDVLEIPVQVNGKVRGRVMLAKAASEEEARAAALGLETVAALAAGKQLKKFIYVAGKIVNIVVG</sequence>
<comment type="catalytic activity">
    <reaction evidence="1">
        <text>tRNA(Leu) + L-leucine + ATP = L-leucyl-tRNA(Leu) + AMP + diphosphate</text>
        <dbReference type="Rhea" id="RHEA:11688"/>
        <dbReference type="Rhea" id="RHEA-COMP:9613"/>
        <dbReference type="Rhea" id="RHEA-COMP:9622"/>
        <dbReference type="ChEBI" id="CHEBI:30616"/>
        <dbReference type="ChEBI" id="CHEBI:33019"/>
        <dbReference type="ChEBI" id="CHEBI:57427"/>
        <dbReference type="ChEBI" id="CHEBI:78442"/>
        <dbReference type="ChEBI" id="CHEBI:78494"/>
        <dbReference type="ChEBI" id="CHEBI:456215"/>
        <dbReference type="EC" id="6.1.1.4"/>
    </reaction>
</comment>
<comment type="subcellular location">
    <subcellularLocation>
        <location evidence="1">Cytoplasm</location>
    </subcellularLocation>
</comment>
<comment type="similarity">
    <text evidence="1">Belongs to the class-I aminoacyl-tRNA synthetase family.</text>
</comment>
<accession>A9EYY7</accession>
<proteinExistence type="inferred from homology"/>